<gene>
    <name evidence="1" type="primary">tsf</name>
    <name type="ordered locus">PFLU_1271</name>
</gene>
<dbReference type="EMBL" id="AM181176">
    <property type="protein sequence ID" value="CAY47528.1"/>
    <property type="molecule type" value="Genomic_DNA"/>
</dbReference>
<dbReference type="RefSeq" id="WP_012722595.1">
    <property type="nucleotide sequence ID" value="NC_012660.1"/>
</dbReference>
<dbReference type="SMR" id="C3K5Z6"/>
<dbReference type="STRING" id="294.SRM1_01130"/>
<dbReference type="GeneID" id="93462887"/>
<dbReference type="eggNOG" id="COG0264">
    <property type="taxonomic scope" value="Bacteria"/>
</dbReference>
<dbReference type="HOGENOM" id="CLU_047155_0_2_6"/>
<dbReference type="OrthoDB" id="9808348at2"/>
<dbReference type="GO" id="GO:0005737">
    <property type="term" value="C:cytoplasm"/>
    <property type="evidence" value="ECO:0007669"/>
    <property type="project" value="UniProtKB-SubCell"/>
</dbReference>
<dbReference type="GO" id="GO:0003746">
    <property type="term" value="F:translation elongation factor activity"/>
    <property type="evidence" value="ECO:0007669"/>
    <property type="project" value="UniProtKB-UniRule"/>
</dbReference>
<dbReference type="CDD" id="cd14275">
    <property type="entry name" value="UBA_EF-Ts"/>
    <property type="match status" value="1"/>
</dbReference>
<dbReference type="FunFam" id="1.10.286.20:FF:000001">
    <property type="entry name" value="Elongation factor Ts"/>
    <property type="match status" value="1"/>
</dbReference>
<dbReference type="FunFam" id="1.10.8.10:FF:000001">
    <property type="entry name" value="Elongation factor Ts"/>
    <property type="match status" value="1"/>
</dbReference>
<dbReference type="Gene3D" id="1.10.286.20">
    <property type="match status" value="1"/>
</dbReference>
<dbReference type="Gene3D" id="1.10.8.10">
    <property type="entry name" value="DNA helicase RuvA subunit, C-terminal domain"/>
    <property type="match status" value="1"/>
</dbReference>
<dbReference type="Gene3D" id="3.30.479.20">
    <property type="entry name" value="Elongation factor Ts, dimerisation domain"/>
    <property type="match status" value="2"/>
</dbReference>
<dbReference type="HAMAP" id="MF_00050">
    <property type="entry name" value="EF_Ts"/>
    <property type="match status" value="1"/>
</dbReference>
<dbReference type="InterPro" id="IPR036402">
    <property type="entry name" value="EF-Ts_dimer_sf"/>
</dbReference>
<dbReference type="InterPro" id="IPR001816">
    <property type="entry name" value="Transl_elong_EFTs/EF1B"/>
</dbReference>
<dbReference type="InterPro" id="IPR014039">
    <property type="entry name" value="Transl_elong_EFTs/EF1B_dimer"/>
</dbReference>
<dbReference type="InterPro" id="IPR018101">
    <property type="entry name" value="Transl_elong_Ts_CS"/>
</dbReference>
<dbReference type="InterPro" id="IPR009060">
    <property type="entry name" value="UBA-like_sf"/>
</dbReference>
<dbReference type="NCBIfam" id="TIGR00116">
    <property type="entry name" value="tsf"/>
    <property type="match status" value="1"/>
</dbReference>
<dbReference type="PANTHER" id="PTHR11741">
    <property type="entry name" value="ELONGATION FACTOR TS"/>
    <property type="match status" value="1"/>
</dbReference>
<dbReference type="PANTHER" id="PTHR11741:SF0">
    <property type="entry name" value="ELONGATION FACTOR TS, MITOCHONDRIAL"/>
    <property type="match status" value="1"/>
</dbReference>
<dbReference type="Pfam" id="PF00889">
    <property type="entry name" value="EF_TS"/>
    <property type="match status" value="1"/>
</dbReference>
<dbReference type="SUPFAM" id="SSF54713">
    <property type="entry name" value="Elongation factor Ts (EF-Ts), dimerisation domain"/>
    <property type="match status" value="2"/>
</dbReference>
<dbReference type="SUPFAM" id="SSF46934">
    <property type="entry name" value="UBA-like"/>
    <property type="match status" value="1"/>
</dbReference>
<dbReference type="PROSITE" id="PS01126">
    <property type="entry name" value="EF_TS_1"/>
    <property type="match status" value="1"/>
</dbReference>
<dbReference type="PROSITE" id="PS01127">
    <property type="entry name" value="EF_TS_2"/>
    <property type="match status" value="1"/>
</dbReference>
<sequence length="287" mass="30360">MAEITAALVKELRERTGEGMMDCKKALTKAGGDIEKAIDDMRASGAIKAAKKAGNVAAEGAIALKEDGKSAVLLEVNSQTDFLALQDDFKAFVAASVEKAFADKLTDAAPLIEAQEADRLVLVGKVGENVNIRRLVRVEGDVVGGYLHGNKIGVAVVLKGGNVELAKDIAMHVAASNPEFLLPSEVSADAIEREKAVFLSLNADKIAGKPENIVENMIKGRISKFLAEASLVEQAFVKNPEIKVGELAKKAGAEIVSFTYFKVGEGIEKPVDNFAEEVAAQLAAAKQ</sequence>
<reference key="1">
    <citation type="journal article" date="2009" name="Genome Biol.">
        <title>Genomic and genetic analyses of diversity and plant interactions of Pseudomonas fluorescens.</title>
        <authorList>
            <person name="Silby M.W."/>
            <person name="Cerdeno-Tarraga A.M."/>
            <person name="Vernikos G.S."/>
            <person name="Giddens S.R."/>
            <person name="Jackson R.W."/>
            <person name="Preston G.M."/>
            <person name="Zhang X.-X."/>
            <person name="Moon C.D."/>
            <person name="Gehrig S.M."/>
            <person name="Godfrey S.A.C."/>
            <person name="Knight C.G."/>
            <person name="Malone J.G."/>
            <person name="Robinson Z."/>
            <person name="Spiers A.J."/>
            <person name="Harris S."/>
            <person name="Challis G.L."/>
            <person name="Yaxley A.M."/>
            <person name="Harris D."/>
            <person name="Seeger K."/>
            <person name="Murphy L."/>
            <person name="Rutter S."/>
            <person name="Squares R."/>
            <person name="Quail M.A."/>
            <person name="Saunders E."/>
            <person name="Mavromatis K."/>
            <person name="Brettin T.S."/>
            <person name="Bentley S.D."/>
            <person name="Hothersall J."/>
            <person name="Stephens E."/>
            <person name="Thomas C.M."/>
            <person name="Parkhill J."/>
            <person name="Levy S.B."/>
            <person name="Rainey P.B."/>
            <person name="Thomson N.R."/>
        </authorList>
    </citation>
    <scope>NUCLEOTIDE SEQUENCE [LARGE SCALE GENOMIC DNA]</scope>
    <source>
        <strain>SBW25</strain>
    </source>
</reference>
<protein>
    <recommendedName>
        <fullName evidence="1">Elongation factor Ts</fullName>
        <shortName evidence="1">EF-Ts</shortName>
    </recommendedName>
</protein>
<proteinExistence type="inferred from homology"/>
<organism>
    <name type="scientific">Pseudomonas fluorescens (strain SBW25)</name>
    <dbReference type="NCBI Taxonomy" id="216595"/>
    <lineage>
        <taxon>Bacteria</taxon>
        <taxon>Pseudomonadati</taxon>
        <taxon>Pseudomonadota</taxon>
        <taxon>Gammaproteobacteria</taxon>
        <taxon>Pseudomonadales</taxon>
        <taxon>Pseudomonadaceae</taxon>
        <taxon>Pseudomonas</taxon>
    </lineage>
</organism>
<comment type="function">
    <text evidence="1">Associates with the EF-Tu.GDP complex and induces the exchange of GDP to GTP. It remains bound to the aminoacyl-tRNA.EF-Tu.GTP complex up to the GTP hydrolysis stage on the ribosome.</text>
</comment>
<comment type="subcellular location">
    <subcellularLocation>
        <location evidence="1">Cytoplasm</location>
    </subcellularLocation>
</comment>
<comment type="similarity">
    <text evidence="1">Belongs to the EF-Ts family.</text>
</comment>
<accession>C3K5Z6</accession>
<keyword id="KW-0963">Cytoplasm</keyword>
<keyword id="KW-0251">Elongation factor</keyword>
<keyword id="KW-0648">Protein biosynthesis</keyword>
<evidence type="ECO:0000255" key="1">
    <source>
        <dbReference type="HAMAP-Rule" id="MF_00050"/>
    </source>
</evidence>
<feature type="chain" id="PRO_1000202249" description="Elongation factor Ts">
    <location>
        <begin position="1"/>
        <end position="287"/>
    </location>
</feature>
<feature type="region of interest" description="Involved in Mg(2+) ion dislocation from EF-Tu" evidence="1">
    <location>
        <begin position="80"/>
        <end position="83"/>
    </location>
</feature>
<name>EFTS_PSEFS</name>